<keyword id="KW-0002">3D-structure</keyword>
<keyword id="KW-0007">Acetylation</keyword>
<keyword id="KW-0067">ATP-binding</keyword>
<keyword id="KW-1003">Cell membrane</keyword>
<keyword id="KW-0143">Chaperone</keyword>
<keyword id="KW-0963">Cytoplasm</keyword>
<keyword id="KW-0903">Direct protein sequencing</keyword>
<keyword id="KW-0378">Hydrolase</keyword>
<keyword id="KW-0472">Membrane</keyword>
<keyword id="KW-0496">Mitochondrion</keyword>
<keyword id="KW-0547">Nucleotide-binding</keyword>
<keyword id="KW-0539">Nucleus</keyword>
<keyword id="KW-0597">Phosphoprotein</keyword>
<keyword id="KW-1185">Reference proteome</keyword>
<keyword id="KW-0702">S-nitrosylation</keyword>
<keyword id="KW-0346">Stress response</keyword>
<keyword id="KW-0832">Ubl conjugation</keyword>
<dbReference type="EC" id="3.6.4.10" evidence="2"/>
<dbReference type="EMBL" id="J04633">
    <property type="protein sequence ID" value="AAA53068.1"/>
    <property type="molecule type" value="mRNA"/>
</dbReference>
<dbReference type="EMBL" id="M57673">
    <property type="protein sequence ID" value="AAA37867.1"/>
    <property type="molecule type" value="Genomic_DNA"/>
</dbReference>
<dbReference type="EMBL" id="BC046614">
    <property type="protein sequence ID" value="AAH46614.1"/>
    <property type="molecule type" value="mRNA"/>
</dbReference>
<dbReference type="EMBL" id="M36830">
    <property type="protein sequence ID" value="AAA37868.1"/>
    <property type="molecule type" value="mRNA"/>
</dbReference>
<dbReference type="EMBL" id="X16857">
    <property type="protein sequence ID" value="CAA34748.1"/>
    <property type="molecule type" value="mRNA"/>
</dbReference>
<dbReference type="CCDS" id="CCDS26172.1"/>
<dbReference type="PIR" id="B32848">
    <property type="entry name" value="HHMS86"/>
</dbReference>
<dbReference type="RefSeq" id="NP_034610.1">
    <property type="nucleotide sequence ID" value="NM_010480.5"/>
</dbReference>
<dbReference type="PDB" id="5H22">
    <property type="method" value="X-ray"/>
    <property type="resolution" value="1.50 A"/>
    <property type="chains" value="A=10-224"/>
</dbReference>
<dbReference type="PDB" id="7D1V">
    <property type="method" value="X-ray"/>
    <property type="resolution" value="1.33 A"/>
    <property type="chains" value="A=16-224"/>
</dbReference>
<dbReference type="PDB" id="7D22">
    <property type="method" value="X-ray"/>
    <property type="resolution" value="1.60 A"/>
    <property type="chains" value="A=16-224"/>
</dbReference>
<dbReference type="PDB" id="7D24">
    <property type="method" value="X-ray"/>
    <property type="resolution" value="1.55 A"/>
    <property type="chains" value="A=16-224"/>
</dbReference>
<dbReference type="PDB" id="7D25">
    <property type="method" value="X-ray"/>
    <property type="resolution" value="1.65 A"/>
    <property type="chains" value="A=16-224"/>
</dbReference>
<dbReference type="PDB" id="7D26">
    <property type="method" value="X-ray"/>
    <property type="resolution" value="1.75 A"/>
    <property type="chains" value="A=16-224"/>
</dbReference>
<dbReference type="PDBsum" id="5H22"/>
<dbReference type="PDBsum" id="7D1V"/>
<dbReference type="PDBsum" id="7D22"/>
<dbReference type="PDBsum" id="7D24"/>
<dbReference type="PDBsum" id="7D25"/>
<dbReference type="PDBsum" id="7D26"/>
<dbReference type="BMRB" id="P07901"/>
<dbReference type="SMR" id="P07901"/>
<dbReference type="BioGRID" id="200455">
    <property type="interactions" value="91"/>
</dbReference>
<dbReference type="ComplexPortal" id="CPX-3289">
    <property type="entry name" value="HSP90A-CDC37 chaperone complex"/>
</dbReference>
<dbReference type="CORUM" id="P07901"/>
<dbReference type="DIP" id="DIP-30975N"/>
<dbReference type="ELM" id="P07901"/>
<dbReference type="FunCoup" id="P07901">
    <property type="interactions" value="2663"/>
</dbReference>
<dbReference type="IntAct" id="P07901">
    <property type="interactions" value="35"/>
</dbReference>
<dbReference type="MINT" id="P07901"/>
<dbReference type="STRING" id="10090.ENSMUSP00000091921"/>
<dbReference type="BindingDB" id="P07901"/>
<dbReference type="ChEMBL" id="CHEMBL4197"/>
<dbReference type="CarbonylDB" id="P07901"/>
<dbReference type="GlyConnect" id="2367">
    <property type="glycosylation" value="1 N-Linked glycan (1 site)"/>
</dbReference>
<dbReference type="GlyCosmos" id="P07901">
    <property type="glycosylation" value="1 site, 1 glycan"/>
</dbReference>
<dbReference type="GlyGen" id="P07901">
    <property type="glycosylation" value="4 sites, 4 N-linked glycans (3 sites), 1 O-linked glycan (1 site)"/>
</dbReference>
<dbReference type="iPTMnet" id="P07901"/>
<dbReference type="MetOSite" id="P07901"/>
<dbReference type="PhosphoSitePlus" id="P07901"/>
<dbReference type="SwissPalm" id="P07901"/>
<dbReference type="REPRODUCTION-2DPAGE" id="P07901"/>
<dbReference type="CPTAC" id="non-CPTAC-3822"/>
<dbReference type="jPOST" id="P07901"/>
<dbReference type="PaxDb" id="10090-ENSMUSP00000091921"/>
<dbReference type="PeptideAtlas" id="P07901"/>
<dbReference type="ProteomicsDB" id="273386"/>
<dbReference type="Pumba" id="P07901"/>
<dbReference type="Antibodypedia" id="3676">
    <property type="antibodies" value="1723 antibodies from 45 providers"/>
</dbReference>
<dbReference type="DNASU" id="15519"/>
<dbReference type="Ensembl" id="ENSMUST00000021698.13">
    <property type="protein sequence ID" value="ENSMUSP00000021698.7"/>
    <property type="gene ID" value="ENSMUSG00000021270.14"/>
</dbReference>
<dbReference type="Ensembl" id="ENSMUST00000094361.11">
    <property type="protein sequence ID" value="ENSMUSP00000091921.5"/>
    <property type="gene ID" value="ENSMUSG00000021270.14"/>
</dbReference>
<dbReference type="GeneID" id="15519"/>
<dbReference type="KEGG" id="mmu:15519"/>
<dbReference type="UCSC" id="uc007pbq.2">
    <property type="organism name" value="mouse"/>
</dbReference>
<dbReference type="AGR" id="MGI:96250"/>
<dbReference type="CTD" id="3320"/>
<dbReference type="MGI" id="MGI:96250">
    <property type="gene designation" value="Hsp90aa1"/>
</dbReference>
<dbReference type="VEuPathDB" id="HostDB:ENSMUSG00000021270"/>
<dbReference type="eggNOG" id="KOG0019">
    <property type="taxonomic scope" value="Eukaryota"/>
</dbReference>
<dbReference type="GeneTree" id="ENSGT01020000230401"/>
<dbReference type="HOGENOM" id="CLU_006684_1_3_1"/>
<dbReference type="InParanoid" id="P07901"/>
<dbReference type="OMA" id="MRRMKEM"/>
<dbReference type="OrthoDB" id="5426351at2759"/>
<dbReference type="PhylomeDB" id="P07901"/>
<dbReference type="TreeFam" id="TF300686"/>
<dbReference type="Reactome" id="R-MMU-1227986">
    <property type="pathway name" value="Signaling by ERBB2"/>
</dbReference>
<dbReference type="Reactome" id="R-MMU-1474151">
    <property type="pathway name" value="Tetrahydrobiopterin (BH4) synthesis, recycling, salvage and regulation"/>
</dbReference>
<dbReference type="Reactome" id="R-MMU-168928">
    <property type="pathway name" value="DDX58/IFIH1-mediated induction of interferon-alpha/beta"/>
</dbReference>
<dbReference type="Reactome" id="R-MMU-2029482">
    <property type="pathway name" value="Regulation of actin dynamics for phagocytic cup formation"/>
</dbReference>
<dbReference type="Reactome" id="R-MMU-203615">
    <property type="pathway name" value="eNOS activation"/>
</dbReference>
<dbReference type="Reactome" id="R-MMU-2565942">
    <property type="pathway name" value="Regulation of PLK1 Activity at G2/M Transition"/>
</dbReference>
<dbReference type="Reactome" id="R-MMU-3371497">
    <property type="pathway name" value="HSP90 chaperone cycle for steroid hormone receptors (SHR) in the presence of ligand"/>
</dbReference>
<dbReference type="Reactome" id="R-MMU-3371511">
    <property type="pathway name" value="HSF1 activation"/>
</dbReference>
<dbReference type="Reactome" id="R-MMU-3371568">
    <property type="pathway name" value="Attenuation phase"/>
</dbReference>
<dbReference type="Reactome" id="R-MMU-3371571">
    <property type="pathway name" value="HSF1-dependent transactivation"/>
</dbReference>
<dbReference type="Reactome" id="R-MMU-380259">
    <property type="pathway name" value="Loss of Nlp from mitotic centrosomes"/>
</dbReference>
<dbReference type="Reactome" id="R-MMU-380270">
    <property type="pathway name" value="Recruitment of mitotic centrosome proteins and complexes"/>
</dbReference>
<dbReference type="Reactome" id="R-MMU-380284">
    <property type="pathway name" value="Loss of proteins required for interphase microtubule organization from the centrosome"/>
</dbReference>
<dbReference type="Reactome" id="R-MMU-380320">
    <property type="pathway name" value="Recruitment of NuMA to mitotic centrosomes"/>
</dbReference>
<dbReference type="Reactome" id="R-MMU-399954">
    <property type="pathway name" value="Sema3A PAK dependent Axon repulsion"/>
</dbReference>
<dbReference type="Reactome" id="R-MMU-4420097">
    <property type="pathway name" value="VEGFA-VEGFR2 Pathway"/>
</dbReference>
<dbReference type="Reactome" id="R-MMU-5218920">
    <property type="pathway name" value="VEGFR2 mediated vascular permeability"/>
</dbReference>
<dbReference type="Reactome" id="R-MMU-5620912">
    <property type="pathway name" value="Anchoring of the basal body to the plasma membrane"/>
</dbReference>
<dbReference type="Reactome" id="R-MMU-5675482">
    <property type="pathway name" value="Regulation of necroptotic cell death"/>
</dbReference>
<dbReference type="Reactome" id="R-MMU-6798695">
    <property type="pathway name" value="Neutrophil degranulation"/>
</dbReference>
<dbReference type="Reactome" id="R-MMU-8852276">
    <property type="pathway name" value="The role of GTSE1 in G2/M progression after G2 checkpoint"/>
</dbReference>
<dbReference type="Reactome" id="R-MMU-8854518">
    <property type="pathway name" value="AURKA Activation by TPX2"/>
</dbReference>
<dbReference type="Reactome" id="R-MMU-8863795">
    <property type="pathway name" value="Downregulation of ERBB2 signaling"/>
</dbReference>
<dbReference type="Reactome" id="R-MMU-8939211">
    <property type="pathway name" value="ESR-mediated signaling"/>
</dbReference>
<dbReference type="Reactome" id="R-MMU-9009391">
    <property type="pathway name" value="Extra-nuclear estrogen signaling"/>
</dbReference>
<dbReference type="Reactome" id="R-MMU-9013418">
    <property type="pathway name" value="RHOBTB2 GTPase cycle"/>
</dbReference>
<dbReference type="Reactome" id="R-MMU-9018519">
    <property type="pathway name" value="Estrogen-dependent gene expression"/>
</dbReference>
<dbReference type="Reactome" id="R-MMU-9652282">
    <property type="pathway name" value="Drug-mediated inhibition of ERBB2 signaling"/>
</dbReference>
<dbReference type="BioGRID-ORCS" id="15519">
    <property type="hits" value="0 hits in 79 CRISPR screens"/>
</dbReference>
<dbReference type="CD-CODE" id="CE726F99">
    <property type="entry name" value="Postsynaptic density"/>
</dbReference>
<dbReference type="CD-CODE" id="DE1E139C">
    <property type="entry name" value="Chromatoid body"/>
</dbReference>
<dbReference type="ChiTaRS" id="Hsp90aa1">
    <property type="organism name" value="mouse"/>
</dbReference>
<dbReference type="PRO" id="PR:P07901"/>
<dbReference type="Proteomes" id="UP000000589">
    <property type="component" value="Chromosome 12"/>
</dbReference>
<dbReference type="RNAct" id="P07901">
    <property type="molecule type" value="protein"/>
</dbReference>
<dbReference type="Bgee" id="ENSMUSG00000021270">
    <property type="expression patterns" value="Expressed in primary oocyte and 139 other cell types or tissues"/>
</dbReference>
<dbReference type="ExpressionAtlas" id="P07901">
    <property type="expression patterns" value="baseline and differential"/>
</dbReference>
<dbReference type="GO" id="GO:0016324">
    <property type="term" value="C:apical plasma membrane"/>
    <property type="evidence" value="ECO:0007669"/>
    <property type="project" value="Ensembl"/>
</dbReference>
<dbReference type="GO" id="GO:0044295">
    <property type="term" value="C:axonal growth cone"/>
    <property type="evidence" value="ECO:0000314"/>
    <property type="project" value="ARUK-UCL"/>
</dbReference>
<dbReference type="GO" id="GO:0016323">
    <property type="term" value="C:basolateral plasma membrane"/>
    <property type="evidence" value="ECO:0007669"/>
    <property type="project" value="Ensembl"/>
</dbReference>
<dbReference type="GO" id="GO:0031526">
    <property type="term" value="C:brush border membrane"/>
    <property type="evidence" value="ECO:0007669"/>
    <property type="project" value="Ensembl"/>
</dbReference>
<dbReference type="GO" id="GO:0009986">
    <property type="term" value="C:cell surface"/>
    <property type="evidence" value="ECO:0007669"/>
    <property type="project" value="Ensembl"/>
</dbReference>
<dbReference type="GO" id="GO:0005737">
    <property type="term" value="C:cytoplasm"/>
    <property type="evidence" value="ECO:0000314"/>
    <property type="project" value="UniProtKB"/>
</dbReference>
<dbReference type="GO" id="GO:0005829">
    <property type="term" value="C:cytosol"/>
    <property type="evidence" value="ECO:0000314"/>
    <property type="project" value="MGI"/>
</dbReference>
<dbReference type="GO" id="GO:0044294">
    <property type="term" value="C:dendritic growth cone"/>
    <property type="evidence" value="ECO:0000314"/>
    <property type="project" value="ARUK-UCL"/>
</dbReference>
<dbReference type="GO" id="GO:0042470">
    <property type="term" value="C:melanosome"/>
    <property type="evidence" value="ECO:0007669"/>
    <property type="project" value="UniProtKB-SubCell"/>
</dbReference>
<dbReference type="GO" id="GO:0005739">
    <property type="term" value="C:mitochondrion"/>
    <property type="evidence" value="ECO:0000250"/>
    <property type="project" value="UniProtKB"/>
</dbReference>
<dbReference type="GO" id="GO:0043209">
    <property type="term" value="C:myelin sheath"/>
    <property type="evidence" value="ECO:0007005"/>
    <property type="project" value="UniProtKB"/>
</dbReference>
<dbReference type="GO" id="GO:0043025">
    <property type="term" value="C:neuronal cell body"/>
    <property type="evidence" value="ECO:0000314"/>
    <property type="project" value="ARUK-UCL"/>
</dbReference>
<dbReference type="GO" id="GO:0005654">
    <property type="term" value="C:nucleoplasm"/>
    <property type="evidence" value="ECO:0007669"/>
    <property type="project" value="Ensembl"/>
</dbReference>
<dbReference type="GO" id="GO:0005634">
    <property type="term" value="C:nucleus"/>
    <property type="evidence" value="ECO:0000250"/>
    <property type="project" value="AgBase"/>
</dbReference>
<dbReference type="GO" id="GO:0048471">
    <property type="term" value="C:perinuclear region of cytoplasm"/>
    <property type="evidence" value="ECO:0000314"/>
    <property type="project" value="ARUK-UCL"/>
</dbReference>
<dbReference type="GO" id="GO:0032991">
    <property type="term" value="C:protein-containing complex"/>
    <property type="evidence" value="ECO:0000314"/>
    <property type="project" value="UniProtKB"/>
</dbReference>
<dbReference type="GO" id="GO:0097226">
    <property type="term" value="C:sperm mitochondrial sheath"/>
    <property type="evidence" value="ECO:0007669"/>
    <property type="project" value="Ensembl"/>
</dbReference>
<dbReference type="GO" id="GO:0097524">
    <property type="term" value="C:sperm plasma membrane"/>
    <property type="evidence" value="ECO:0007669"/>
    <property type="project" value="Ensembl"/>
</dbReference>
<dbReference type="GO" id="GO:0005524">
    <property type="term" value="F:ATP binding"/>
    <property type="evidence" value="ECO:0000250"/>
    <property type="project" value="UniProtKB"/>
</dbReference>
<dbReference type="GO" id="GO:0016887">
    <property type="term" value="F:ATP hydrolysis activity"/>
    <property type="evidence" value="ECO:0007669"/>
    <property type="project" value="Ensembl"/>
</dbReference>
<dbReference type="GO" id="GO:0140662">
    <property type="term" value="F:ATP-dependent protein folding chaperone"/>
    <property type="evidence" value="ECO:0007669"/>
    <property type="project" value="InterPro"/>
</dbReference>
<dbReference type="GO" id="GO:0002135">
    <property type="term" value="F:CTP binding"/>
    <property type="evidence" value="ECO:0007669"/>
    <property type="project" value="Ensembl"/>
</dbReference>
<dbReference type="GO" id="GO:0032564">
    <property type="term" value="F:dATP binding"/>
    <property type="evidence" value="ECO:0007669"/>
    <property type="project" value="Ensembl"/>
</dbReference>
<dbReference type="GO" id="GO:0097718">
    <property type="term" value="F:disordered domain specific binding"/>
    <property type="evidence" value="ECO:0007669"/>
    <property type="project" value="Ensembl"/>
</dbReference>
<dbReference type="GO" id="GO:0070182">
    <property type="term" value="F:DNA polymerase binding"/>
    <property type="evidence" value="ECO:0007669"/>
    <property type="project" value="Ensembl"/>
</dbReference>
<dbReference type="GO" id="GO:0005525">
    <property type="term" value="F:GTP binding"/>
    <property type="evidence" value="ECO:0007669"/>
    <property type="project" value="Ensembl"/>
</dbReference>
<dbReference type="GO" id="GO:0051020">
    <property type="term" value="F:GTPase binding"/>
    <property type="evidence" value="ECO:0007669"/>
    <property type="project" value="Ensembl"/>
</dbReference>
<dbReference type="GO" id="GO:0042826">
    <property type="term" value="F:histone deacetylase binding"/>
    <property type="evidence" value="ECO:0007669"/>
    <property type="project" value="Ensembl"/>
</dbReference>
<dbReference type="GO" id="GO:0042802">
    <property type="term" value="F:identical protein binding"/>
    <property type="evidence" value="ECO:0000353"/>
    <property type="project" value="MGI"/>
</dbReference>
<dbReference type="GO" id="GO:0003729">
    <property type="term" value="F:mRNA binding"/>
    <property type="evidence" value="ECO:0007669"/>
    <property type="project" value="Ensembl"/>
</dbReference>
<dbReference type="GO" id="GO:0030235">
    <property type="term" value="F:nitric-oxide synthase regulator activity"/>
    <property type="evidence" value="ECO:0000314"/>
    <property type="project" value="UniProtKB"/>
</dbReference>
<dbReference type="GO" id="GO:0044183">
    <property type="term" value="F:protein folding chaperone"/>
    <property type="evidence" value="ECO:0000315"/>
    <property type="project" value="UniProtKB"/>
</dbReference>
<dbReference type="GO" id="GO:0042803">
    <property type="term" value="F:protein homodimerization activity"/>
    <property type="evidence" value="ECO:0007669"/>
    <property type="project" value="Ensembl"/>
</dbReference>
<dbReference type="GO" id="GO:0019903">
    <property type="term" value="F:protein phosphatase binding"/>
    <property type="evidence" value="ECO:0007669"/>
    <property type="project" value="Ensembl"/>
</dbReference>
<dbReference type="GO" id="GO:1990782">
    <property type="term" value="F:protein tyrosine kinase binding"/>
    <property type="evidence" value="ECO:0007669"/>
    <property type="project" value="Ensembl"/>
</dbReference>
<dbReference type="GO" id="GO:0051022">
    <property type="term" value="F:Rho GDP-dissociation inhibitor binding"/>
    <property type="evidence" value="ECO:0007669"/>
    <property type="project" value="Ensembl"/>
</dbReference>
<dbReference type="GO" id="GO:0097110">
    <property type="term" value="F:scaffold protein binding"/>
    <property type="evidence" value="ECO:0007669"/>
    <property type="project" value="Ensembl"/>
</dbReference>
<dbReference type="GO" id="GO:0017098">
    <property type="term" value="F:sulfonylurea receptor binding"/>
    <property type="evidence" value="ECO:0007669"/>
    <property type="project" value="Ensembl"/>
</dbReference>
<dbReference type="GO" id="GO:0048156">
    <property type="term" value="F:tau protein binding"/>
    <property type="evidence" value="ECO:0007669"/>
    <property type="project" value="Ensembl"/>
</dbReference>
<dbReference type="GO" id="GO:0030911">
    <property type="term" value="F:TPR domain binding"/>
    <property type="evidence" value="ECO:0000250"/>
    <property type="project" value="UniProtKB"/>
</dbReference>
<dbReference type="GO" id="GO:0044325">
    <property type="term" value="F:transmembrane transporter binding"/>
    <property type="evidence" value="ECO:0007669"/>
    <property type="project" value="Ensembl"/>
</dbReference>
<dbReference type="GO" id="GO:0031625">
    <property type="term" value="F:ubiquitin protein ligase binding"/>
    <property type="evidence" value="ECO:0007669"/>
    <property type="project" value="Ensembl"/>
</dbReference>
<dbReference type="GO" id="GO:0051082">
    <property type="term" value="F:unfolded protein binding"/>
    <property type="evidence" value="ECO:0000304"/>
    <property type="project" value="UniProtKB"/>
</dbReference>
<dbReference type="GO" id="GO:0002134">
    <property type="term" value="F:UTP binding"/>
    <property type="evidence" value="ECO:0007669"/>
    <property type="project" value="Ensembl"/>
</dbReference>
<dbReference type="GO" id="GO:0002218">
    <property type="term" value="P:activation of innate immune response"/>
    <property type="evidence" value="ECO:0000250"/>
    <property type="project" value="UniProtKB"/>
</dbReference>
<dbReference type="GO" id="GO:0010659">
    <property type="term" value="P:cardiac muscle cell apoptotic process"/>
    <property type="evidence" value="ECO:0007669"/>
    <property type="project" value="Ensembl"/>
</dbReference>
<dbReference type="GO" id="GO:0034605">
    <property type="term" value="P:cellular response to heat"/>
    <property type="evidence" value="ECO:0000315"/>
    <property type="project" value="UniProtKB"/>
</dbReference>
<dbReference type="GO" id="GO:0098586">
    <property type="term" value="P:cellular response to virus"/>
    <property type="evidence" value="ECO:0000250"/>
    <property type="project" value="UniProtKB"/>
</dbReference>
<dbReference type="GO" id="GO:0051131">
    <property type="term" value="P:chaperone-mediated protein complex assembly"/>
    <property type="evidence" value="ECO:0007669"/>
    <property type="project" value="Ensembl"/>
</dbReference>
<dbReference type="GO" id="GO:1902988">
    <property type="term" value="P:neurofibrillary tangle assembly"/>
    <property type="evidence" value="ECO:0007669"/>
    <property type="project" value="Ensembl"/>
</dbReference>
<dbReference type="GO" id="GO:0001764">
    <property type="term" value="P:neuron migration"/>
    <property type="evidence" value="ECO:0007669"/>
    <property type="project" value="Ensembl"/>
</dbReference>
<dbReference type="GO" id="GO:0006809">
    <property type="term" value="P:nitric oxide biosynthetic process"/>
    <property type="evidence" value="ECO:0000304"/>
    <property type="project" value="UniProtKB"/>
</dbReference>
<dbReference type="GO" id="GO:0060452">
    <property type="term" value="P:positive regulation of cardiac muscle contraction"/>
    <property type="evidence" value="ECO:0007669"/>
    <property type="project" value="Ensembl"/>
</dbReference>
<dbReference type="GO" id="GO:0045793">
    <property type="term" value="P:positive regulation of cell size"/>
    <property type="evidence" value="ECO:0007669"/>
    <property type="project" value="Ensembl"/>
</dbReference>
<dbReference type="GO" id="GO:0045585">
    <property type="term" value="P:positive regulation of cytotoxic T cell differentiation"/>
    <property type="evidence" value="ECO:0000304"/>
    <property type="project" value="UniProtKB"/>
</dbReference>
<dbReference type="GO" id="GO:0002230">
    <property type="term" value="P:positive regulation of defense response to virus by host"/>
    <property type="evidence" value="ECO:0000250"/>
    <property type="project" value="UniProtKB"/>
</dbReference>
<dbReference type="GO" id="GO:0032728">
    <property type="term" value="P:positive regulation of interferon-beta production"/>
    <property type="evidence" value="ECO:0000250"/>
    <property type="project" value="UniProtKB"/>
</dbReference>
<dbReference type="GO" id="GO:0010592">
    <property type="term" value="P:positive regulation of lamellipodium assembly"/>
    <property type="evidence" value="ECO:0007669"/>
    <property type="project" value="Ensembl"/>
</dbReference>
<dbReference type="GO" id="GO:0045429">
    <property type="term" value="P:positive regulation of nitric oxide biosynthetic process"/>
    <property type="evidence" value="ECO:0000314"/>
    <property type="project" value="UniProtKB"/>
</dbReference>
<dbReference type="GO" id="GO:0045732">
    <property type="term" value="P:positive regulation of protein catabolic process"/>
    <property type="evidence" value="ECO:0007669"/>
    <property type="project" value="Ensembl"/>
</dbReference>
<dbReference type="GO" id="GO:0042307">
    <property type="term" value="P:positive regulation of protein import into nucleus"/>
    <property type="evidence" value="ECO:0007669"/>
    <property type="project" value="Ensembl"/>
</dbReference>
<dbReference type="GO" id="GO:0032273">
    <property type="term" value="P:positive regulation of protein polymerization"/>
    <property type="evidence" value="ECO:0007669"/>
    <property type="project" value="Ensembl"/>
</dbReference>
<dbReference type="GO" id="GO:0006457">
    <property type="term" value="P:protein folding"/>
    <property type="evidence" value="ECO:0000315"/>
    <property type="project" value="UniProtKB"/>
</dbReference>
<dbReference type="GO" id="GO:0045040">
    <property type="term" value="P:protein insertion into mitochondrial outer membrane"/>
    <property type="evidence" value="ECO:0007669"/>
    <property type="project" value="Ensembl"/>
</dbReference>
<dbReference type="GO" id="GO:0042026">
    <property type="term" value="P:protein refolding"/>
    <property type="evidence" value="ECO:0000304"/>
    <property type="project" value="UniProtKB"/>
</dbReference>
<dbReference type="GO" id="GO:0050821">
    <property type="term" value="P:protein stabilization"/>
    <property type="evidence" value="ECO:0007669"/>
    <property type="project" value="Ensembl"/>
</dbReference>
<dbReference type="GO" id="GO:0042981">
    <property type="term" value="P:regulation of apoptotic process"/>
    <property type="evidence" value="ECO:0000250"/>
    <property type="project" value="UniProtKB"/>
</dbReference>
<dbReference type="GO" id="GO:0099072">
    <property type="term" value="P:regulation of postsynaptic membrane neurotransmitter receptor levels"/>
    <property type="evidence" value="ECO:0007669"/>
    <property type="project" value="Ensembl"/>
</dbReference>
<dbReference type="GO" id="GO:0032880">
    <property type="term" value="P:regulation of protein localization"/>
    <property type="evidence" value="ECO:0000315"/>
    <property type="project" value="ARUK-UCL"/>
</dbReference>
<dbReference type="GO" id="GO:0031396">
    <property type="term" value="P:regulation of protein ubiquitination"/>
    <property type="evidence" value="ECO:0007669"/>
    <property type="project" value="Ensembl"/>
</dbReference>
<dbReference type="GO" id="GO:0046677">
    <property type="term" value="P:response to antibiotic"/>
    <property type="evidence" value="ECO:0000250"/>
    <property type="project" value="AgBase"/>
</dbReference>
<dbReference type="GO" id="GO:0042220">
    <property type="term" value="P:response to cocaine"/>
    <property type="evidence" value="ECO:0007669"/>
    <property type="project" value="Ensembl"/>
</dbReference>
<dbReference type="GO" id="GO:0009409">
    <property type="term" value="P:response to cold"/>
    <property type="evidence" value="ECO:0000250"/>
    <property type="project" value="AgBase"/>
</dbReference>
<dbReference type="GO" id="GO:0043627">
    <property type="term" value="P:response to estrogen"/>
    <property type="evidence" value="ECO:0007669"/>
    <property type="project" value="Ensembl"/>
</dbReference>
<dbReference type="GO" id="GO:0009408">
    <property type="term" value="P:response to heat"/>
    <property type="evidence" value="ECO:0000250"/>
    <property type="project" value="AgBase"/>
</dbReference>
<dbReference type="GO" id="GO:0009651">
    <property type="term" value="P:response to salt stress"/>
    <property type="evidence" value="ECO:0007669"/>
    <property type="project" value="Ensembl"/>
</dbReference>
<dbReference type="GO" id="GO:0006986">
    <property type="term" value="P:response to unfolded protein"/>
    <property type="evidence" value="ECO:0000304"/>
    <property type="project" value="UniProtKB"/>
</dbReference>
<dbReference type="GO" id="GO:0009410">
    <property type="term" value="P:response to xenobiotic stimulus"/>
    <property type="evidence" value="ECO:0007669"/>
    <property type="project" value="Ensembl"/>
</dbReference>
<dbReference type="GO" id="GO:0003009">
    <property type="term" value="P:skeletal muscle contraction"/>
    <property type="evidence" value="ECO:0007669"/>
    <property type="project" value="Ensembl"/>
</dbReference>
<dbReference type="GO" id="GO:1905323">
    <property type="term" value="P:telomerase holoenzyme complex assembly"/>
    <property type="evidence" value="ECO:0007669"/>
    <property type="project" value="Ensembl"/>
</dbReference>
<dbReference type="GO" id="GO:0007004">
    <property type="term" value="P:telomere maintenance via telomerase"/>
    <property type="evidence" value="ECO:0007669"/>
    <property type="project" value="Ensembl"/>
</dbReference>
<dbReference type="CDD" id="cd16927">
    <property type="entry name" value="HATPase_Hsp90-like"/>
    <property type="match status" value="1"/>
</dbReference>
<dbReference type="FunFam" id="1.20.120.790:FF:000001">
    <property type="entry name" value="Heat shock protein 90 alpha"/>
    <property type="match status" value="1"/>
</dbReference>
<dbReference type="FunFam" id="3.30.230.80:FF:000001">
    <property type="entry name" value="Heat shock protein 90 alpha"/>
    <property type="match status" value="1"/>
</dbReference>
<dbReference type="FunFam" id="3.40.50.11260:FF:000001">
    <property type="entry name" value="Heat shock protein 90 alpha"/>
    <property type="match status" value="1"/>
</dbReference>
<dbReference type="FunFam" id="3.30.565.10:FF:000204">
    <property type="entry name" value="Heat shock protein HSP 90-beta"/>
    <property type="match status" value="1"/>
</dbReference>
<dbReference type="Gene3D" id="3.30.230.80">
    <property type="match status" value="1"/>
</dbReference>
<dbReference type="Gene3D" id="3.40.50.11260">
    <property type="match status" value="1"/>
</dbReference>
<dbReference type="Gene3D" id="1.20.120.790">
    <property type="entry name" value="Heat shock protein 90, C-terminal domain"/>
    <property type="match status" value="1"/>
</dbReference>
<dbReference type="Gene3D" id="3.30.565.10">
    <property type="entry name" value="Histidine kinase-like ATPase, C-terminal domain"/>
    <property type="match status" value="1"/>
</dbReference>
<dbReference type="HAMAP" id="MF_00505">
    <property type="entry name" value="HSP90"/>
    <property type="match status" value="1"/>
</dbReference>
<dbReference type="InterPro" id="IPR036890">
    <property type="entry name" value="HATPase_C_sf"/>
</dbReference>
<dbReference type="InterPro" id="IPR019805">
    <property type="entry name" value="Heat_shock_protein_90_CS"/>
</dbReference>
<dbReference type="InterPro" id="IPR037196">
    <property type="entry name" value="HSP90_C"/>
</dbReference>
<dbReference type="InterPro" id="IPR001404">
    <property type="entry name" value="Hsp90_fam"/>
</dbReference>
<dbReference type="InterPro" id="IPR020575">
    <property type="entry name" value="Hsp90_N"/>
</dbReference>
<dbReference type="InterPro" id="IPR020568">
    <property type="entry name" value="Ribosomal_Su5_D2-typ_SF"/>
</dbReference>
<dbReference type="NCBIfam" id="NF003555">
    <property type="entry name" value="PRK05218.1"/>
    <property type="match status" value="1"/>
</dbReference>
<dbReference type="PANTHER" id="PTHR11528">
    <property type="entry name" value="HEAT SHOCK PROTEIN 90 FAMILY MEMBER"/>
    <property type="match status" value="1"/>
</dbReference>
<dbReference type="Pfam" id="PF13589">
    <property type="entry name" value="HATPase_c_3"/>
    <property type="match status" value="1"/>
</dbReference>
<dbReference type="Pfam" id="PF00183">
    <property type="entry name" value="HSP90"/>
    <property type="match status" value="1"/>
</dbReference>
<dbReference type="PIRSF" id="PIRSF002583">
    <property type="entry name" value="Hsp90"/>
    <property type="match status" value="1"/>
</dbReference>
<dbReference type="PRINTS" id="PR00775">
    <property type="entry name" value="HEATSHOCK90"/>
</dbReference>
<dbReference type="SMART" id="SM00387">
    <property type="entry name" value="HATPase_c"/>
    <property type="match status" value="1"/>
</dbReference>
<dbReference type="SUPFAM" id="SSF55874">
    <property type="entry name" value="ATPase domain of HSP90 chaperone/DNA topoisomerase II/histidine kinase"/>
    <property type="match status" value="1"/>
</dbReference>
<dbReference type="SUPFAM" id="SSF110942">
    <property type="entry name" value="HSP90 C-terminal domain"/>
    <property type="match status" value="1"/>
</dbReference>
<dbReference type="SUPFAM" id="SSF54211">
    <property type="entry name" value="Ribosomal protein S5 domain 2-like"/>
    <property type="match status" value="1"/>
</dbReference>
<dbReference type="PROSITE" id="PS00298">
    <property type="entry name" value="HSP90"/>
    <property type="match status" value="1"/>
</dbReference>
<protein>
    <recommendedName>
        <fullName evidence="18">Heat shock protein HSP 90-alpha</fullName>
        <ecNumber evidence="2">3.6.4.10</ecNumber>
    </recommendedName>
    <alternativeName>
        <fullName>Heat shock 86 kDa</fullName>
        <shortName>HSP 86</shortName>
        <shortName>HSP86</shortName>
    </alternativeName>
    <alternativeName>
        <fullName>Tumor-specific transplantation 86 kDa antigen</fullName>
        <shortName>TSTA</shortName>
    </alternativeName>
</protein>
<proteinExistence type="evidence at protein level"/>
<organism>
    <name type="scientific">Mus musculus</name>
    <name type="common">Mouse</name>
    <dbReference type="NCBI Taxonomy" id="10090"/>
    <lineage>
        <taxon>Eukaryota</taxon>
        <taxon>Metazoa</taxon>
        <taxon>Chordata</taxon>
        <taxon>Craniata</taxon>
        <taxon>Vertebrata</taxon>
        <taxon>Euteleostomi</taxon>
        <taxon>Mammalia</taxon>
        <taxon>Eutheria</taxon>
        <taxon>Euarchontoglires</taxon>
        <taxon>Glires</taxon>
        <taxon>Rodentia</taxon>
        <taxon>Myomorpha</taxon>
        <taxon>Muroidea</taxon>
        <taxon>Muridae</taxon>
        <taxon>Murinae</taxon>
        <taxon>Mus</taxon>
        <taxon>Mus</taxon>
    </lineage>
</organism>
<reference key="1">
    <citation type="journal article" date="1989" name="J. Biol. Chem.">
        <title>Murine 86- and 84-kDa heat shock proteins, cDNA sequences, chromosome assignments, and evolutionary origins.</title>
        <authorList>
            <person name="Moore S.K."/>
            <person name="Kozak C."/>
            <person name="Robinson E.A."/>
            <person name="Ullrich S.J."/>
            <person name="Appella E."/>
        </authorList>
    </citation>
    <scope>NUCLEOTIDE SEQUENCE [MRNA]</scope>
    <source>
        <strain>BALB/cJ</strain>
    </source>
</reference>
<reference key="2">
    <citation type="journal article" date="1991" name="Genomics">
        <title>Mapping of the mouse 86-kDa heat-shock protein expressed gene (Hsp86-1) on chromosome 12 and related genes on chromosomes 3, 4, 9, and 11.</title>
        <authorList>
            <person name="Moore S.K."/>
            <person name="Appella E."/>
            <person name="Villar C.J."/>
            <person name="Kozak C.A."/>
        </authorList>
    </citation>
    <scope>NUCLEOTIDE SEQUENCE [GENOMIC DNA]</scope>
    <source>
        <strain>BALB/cJ</strain>
    </source>
</reference>
<reference key="3">
    <citation type="journal article" date="2004" name="Genome Res.">
        <title>The status, quality, and expansion of the NIH full-length cDNA project: the Mammalian Gene Collection (MGC).</title>
        <authorList>
            <consortium name="The MGC Project Team"/>
        </authorList>
    </citation>
    <scope>NUCLEOTIDE SEQUENCE [LARGE SCALE MRNA]</scope>
    <source>
        <tissue>Retina</tissue>
    </source>
</reference>
<reference key="4">
    <citation type="journal article" date="1986" name="Proc. Natl. Acad. Sci. U.S.A.">
        <title>A mouse tumor-specific transplantation antigen is a heat shock-related protein.</title>
        <authorList>
            <person name="Ullrich S.J."/>
            <person name="Robinson E.A."/>
            <person name="Law L.W."/>
            <person name="Willingham M."/>
            <person name="Appella E."/>
        </authorList>
    </citation>
    <scope>PROTEIN SEQUENCE OF 2-31</scope>
</reference>
<reference key="5">
    <citation type="journal article" date="1994" name="Mol. Cell. Biol.">
        <title>The carboxy-terminal region of mammalian HSP90 is required for its dimerization and function in vivo.</title>
        <authorList>
            <person name="Minami Y."/>
            <person name="Kimura Y."/>
            <person name="Kawasaki H."/>
            <person name="Suzuki K."/>
            <person name="Yahara I."/>
        </authorList>
    </citation>
    <scope>PROTEIN SEQUENCE OF 2-12</scope>
    <scope>HOMODIMERIZATION</scope>
</reference>
<reference key="6">
    <citation type="journal article" date="1988" name="Gene">
        <title>Heat-shock proteins, Hsp84 and Hsp86, of mice and men: two related genes encode formerly identified tumour-specific transplantation antigens.</title>
        <authorList>
            <person name="Hoffmann T."/>
            <person name="Hovemann B."/>
        </authorList>
    </citation>
    <scope>NUCLEOTIDE SEQUENCE [MRNA] OF 6-356</scope>
</reference>
<reference key="7">
    <citation type="submission" date="2009-01" db="UniProtKB">
        <authorList>
            <person name="Lubec G."/>
            <person name="Kang S.U."/>
            <person name="Klug S."/>
            <person name="Sunyer B."/>
            <person name="Chen W.-Q."/>
        </authorList>
    </citation>
    <scope>PROTEIN SEQUENCE OF 47-58; 61-69; 75-84; 88-112; 154-173; 186-201; 210-224; 285-356; 369-401; 448-457; 491-511; 515-535; 548-561; 569-574; 593-632 AND 634-648</scope>
    <source>
        <strain>C57BL/6J</strain>
        <strain>OF1</strain>
        <tissue>Brain</tissue>
        <tissue>Hippocampus</tissue>
    </source>
</reference>
<reference key="8">
    <citation type="journal article" date="1989" name="Differentiation">
        <title>High constitutive transcription of HSP86 gene in murine embryonal carcinoma cells.</title>
        <authorList>
            <person name="Legagneux V."/>
            <person name="Mezger V."/>
            <person name="Quelard C."/>
            <person name="Barnier J.V."/>
            <person name="Bensaude O."/>
            <person name="Morange M."/>
        </authorList>
    </citation>
    <scope>NUCLEOTIDE SEQUENCE [MRNA] OF 460-733</scope>
</reference>
<reference key="9">
    <citation type="journal article" date="1999" name="Mol. Cell. Biol.">
        <title>Kinase suppressor of Ras forms a multiprotein signaling complex and modulates MEK localization.</title>
        <authorList>
            <person name="Stewart S."/>
            <person name="Sundaram M."/>
            <person name="Zhang Y."/>
            <person name="Lee J."/>
            <person name="Han M."/>
            <person name="Guan K.L."/>
        </authorList>
    </citation>
    <scope>INTERACTION WITH KSR1</scope>
</reference>
<reference key="10">
    <citation type="journal article" date="1997" name="J. Biol. Chem.">
        <title>Protein phosphatase 5 is a major component of glucocorticoid receptor.hsp90 complexes with properties of an FK506-binding immunophilin.</title>
        <authorList>
            <person name="Silverstein A.M."/>
            <person name="Galigniana M.D."/>
            <person name="Chen M.S."/>
            <person name="Owens-Grillo J.K."/>
            <person name="Chinkers M."/>
            <person name="Pratt W.B."/>
        </authorList>
    </citation>
    <scope>IDENTIFICATION IN A COMPLEX WITH NR3C1 AND FKBP4; PPID; PPP5C OR STIP1</scope>
</reference>
<reference key="11">
    <citation type="journal article" date="2001" name="J. Biol. Chem.">
        <title>Evidence that the peptidylprolyl isomerase domain of the hsp90-binding immunophilin FKBP52 is involved in both dynein interaction and glucocorticoid receptor movement to the nucleus.</title>
        <authorList>
            <person name="Galigniana M.D."/>
            <person name="Radanyi C."/>
            <person name="Renoir J.-M."/>
            <person name="Housley P.R."/>
            <person name="Pratt W.B."/>
        </authorList>
    </citation>
    <scope>IDENTIFICATION IN A COMPLEX WITH NR3C1 AND FKBP4</scope>
</reference>
<reference key="12">
    <citation type="journal article" date="2002" name="J. Biol. Chem.">
        <title>A new first step in activation of steroid receptors: hormone-induced switching of FKBP51 and FKBP52 immunophilins.</title>
        <authorList>
            <person name="Davies T.H."/>
            <person name="Ning Y.M."/>
            <person name="Sanchez E.R."/>
        </authorList>
    </citation>
    <scope>IDENTIFICATION IN A HETEROMULTIMERIC COMPLEX WITH NR3C1 AND FKBP4 OR FKBP5</scope>
    <scope>SUBCELLULAR LOCATION</scope>
</reference>
<reference key="13">
    <citation type="journal article" date="1989" name="J. Biol. Chem.">
        <title>The human double-stranded DNA-activated protein kinase phosphorylates the 90-kDa heat-shock protein, hsp90 alpha at two NH2-terminal threonine residues.</title>
        <authorList>
            <person name="Lees-Miller S.P."/>
            <person name="Anderson C.W."/>
        </authorList>
    </citation>
    <scope>PHOSPHORYLATION AT THR-5 AND THR-7 BY PRKDC</scope>
</reference>
<reference key="14">
    <citation type="journal article" date="2005" name="Biochem. Biophys. Res. Commun.">
        <title>Proteomic identification of proteins conjugated to ISG15 in mouse and human cells.</title>
        <authorList>
            <person name="Giannakopoulos N.V."/>
            <person name="Luo J.K."/>
            <person name="Papov V."/>
            <person name="Zou W."/>
            <person name="Lenschow D.J."/>
            <person name="Jacobs B.S."/>
            <person name="Borden E.C."/>
            <person name="Li J."/>
            <person name="Virgin H.W."/>
            <person name="Zhang D.E."/>
        </authorList>
    </citation>
    <scope>ISGYLATION</scope>
</reference>
<reference key="15">
    <citation type="journal article" date="2007" name="J. Immunol.">
        <title>Quantitative time-resolved phosphoproteomic analysis of mast cell signaling.</title>
        <authorList>
            <person name="Cao L."/>
            <person name="Yu K."/>
            <person name="Banh C."/>
            <person name="Nguyen V."/>
            <person name="Ritz A."/>
            <person name="Raphael B.J."/>
            <person name="Kawakami Y."/>
            <person name="Kawakami T."/>
            <person name="Salomon A.R."/>
        </authorList>
    </citation>
    <scope>PHOSPHORYLATION [LARGE SCALE ANALYSIS] AT TYR-493</scope>
    <scope>IDENTIFICATION BY MASS SPECTROMETRY [LARGE SCALE ANALYSIS]</scope>
    <source>
        <tissue>Mast cell</tissue>
    </source>
</reference>
<reference key="16">
    <citation type="journal article" date="2007" name="Mol. Cell. Proteomics">
        <title>Mitochondrial phosphoproteome revealed by an improved IMAC method and MS/MS/MS.</title>
        <authorList>
            <person name="Lee J."/>
            <person name="Xu Y."/>
            <person name="Chen Y."/>
            <person name="Sprung R."/>
            <person name="Kim S.C."/>
            <person name="Xie S."/>
            <person name="Zhao Y."/>
        </authorList>
    </citation>
    <scope>PHOSPHORYLATION [LARGE SCALE ANALYSIS] AT SER-231</scope>
    <scope>IDENTIFICATION BY MASS SPECTROMETRY [LARGE SCALE ANALYSIS]</scope>
    <source>
        <tissue>Liver</tissue>
    </source>
</reference>
<reference key="17">
    <citation type="journal article" date="2007" name="Proc. Natl. Acad. Sci. U.S.A.">
        <title>Large-scale phosphorylation analysis of mouse liver.</title>
        <authorList>
            <person name="Villen J."/>
            <person name="Beausoleil S.A."/>
            <person name="Gerber S.A."/>
            <person name="Gygi S.P."/>
        </authorList>
    </citation>
    <scope>PHOSPHORYLATION [LARGE SCALE ANALYSIS] AT SER-263</scope>
    <scope>IDENTIFICATION BY MASS SPECTROMETRY [LARGE SCALE ANALYSIS]</scope>
    <source>
        <tissue>Liver</tissue>
    </source>
</reference>
<reference key="18">
    <citation type="journal article" date="2008" name="J. Proteome Res.">
        <title>Large-scale identification and evolution indexing of tyrosine phosphorylation sites from murine brain.</title>
        <authorList>
            <person name="Ballif B.A."/>
            <person name="Carey G.R."/>
            <person name="Sunyaev S.R."/>
            <person name="Gygi S.P."/>
        </authorList>
    </citation>
    <scope>PHOSPHORYLATION [LARGE SCALE ANALYSIS] AT TYR-314</scope>
    <scope>IDENTIFICATION BY MASS SPECTROMETRY [LARGE SCALE ANALYSIS]</scope>
    <source>
        <tissue>Brain</tissue>
    </source>
</reference>
<reference key="19">
    <citation type="journal article" date="2008" name="J. Proteome Res.">
        <title>Specific phosphopeptide enrichment with immobilized titanium ion affinity chromatography adsorbent for phosphoproteome analysis.</title>
        <authorList>
            <person name="Zhou H."/>
            <person name="Ye M."/>
            <person name="Dong J."/>
            <person name="Han G."/>
            <person name="Jiang X."/>
            <person name="Wu R."/>
            <person name="Zou H."/>
        </authorList>
    </citation>
    <scope>PHOSPHORYLATION [LARGE SCALE ANALYSIS] AT SER-263</scope>
    <scope>IDENTIFICATION BY MASS SPECTROMETRY [LARGE SCALE ANALYSIS]</scope>
    <source>
        <tissue>Liver</tissue>
    </source>
</reference>
<reference key="20">
    <citation type="journal article" date="2009" name="Immunity">
        <title>The phagosomal proteome in interferon-gamma-activated macrophages.</title>
        <authorList>
            <person name="Trost M."/>
            <person name="English L."/>
            <person name="Lemieux S."/>
            <person name="Courcelles M."/>
            <person name="Desjardins M."/>
            <person name="Thibault P."/>
        </authorList>
    </citation>
    <scope>PHOSPHORYLATION [LARGE SCALE ANALYSIS] AT SER-263</scope>
    <scope>IDENTIFICATION BY MASS SPECTROMETRY [LARGE SCALE ANALYSIS]</scope>
</reference>
<reference key="21">
    <citation type="journal article" date="2010" name="Cell">
        <title>A tissue-specific atlas of mouse protein phosphorylation and expression.</title>
        <authorList>
            <person name="Huttlin E.L."/>
            <person name="Jedrychowski M.P."/>
            <person name="Elias J.E."/>
            <person name="Goswami T."/>
            <person name="Rad R."/>
            <person name="Beausoleil S.A."/>
            <person name="Villen J."/>
            <person name="Haas W."/>
            <person name="Sowa M.E."/>
            <person name="Gygi S.P."/>
        </authorList>
    </citation>
    <scope>PHOSPHORYLATION [LARGE SCALE ANALYSIS] AT SER-231; SER-263 AND SER-477</scope>
    <scope>IDENTIFICATION BY MASS SPECTROMETRY [LARGE SCALE ANALYSIS]</scope>
    <source>
        <tissue>Brain</tissue>
        <tissue>Brown adipose tissue</tissue>
        <tissue>Heart</tissue>
        <tissue>Kidney</tissue>
        <tissue>Liver</tissue>
        <tissue>Lung</tissue>
        <tissue>Pancreas</tissue>
        <tissue>Spleen</tissue>
        <tissue>Testis</tissue>
    </source>
</reference>
<reference key="22">
    <citation type="journal article" date="2011" name="Nat. Med.">
        <title>Requirement of argininosuccinate lyase for systemic nitric oxide production.</title>
        <authorList>
            <person name="Erez A."/>
            <person name="Nagamani S.C."/>
            <person name="Shchelochkov O.A."/>
            <person name="Premkumar M.H."/>
            <person name="Campeau P.M."/>
            <person name="Chen Y."/>
            <person name="Garg H.K."/>
            <person name="Li L."/>
            <person name="Mian A."/>
            <person name="Bertin T.K."/>
            <person name="Black J.O."/>
            <person name="Zeng H."/>
            <person name="Tang Y."/>
            <person name="Reddy A.K."/>
            <person name="Summar M."/>
            <person name="O'Brien W.E."/>
            <person name="Harrison D.G."/>
            <person name="Mitch W.E."/>
            <person name="Marini J.C."/>
            <person name="Aschner J.L."/>
            <person name="Bryan N.S."/>
            <person name="Lee B."/>
        </authorList>
    </citation>
    <scope>INTERACTION WITH ASL; ASS1 AND NOS2</scope>
</reference>
<reference key="23">
    <citation type="journal article" date="2012" name="J. Cell Biol.">
        <title>Hectd1 regulates intracellular localization and secretion of Hsp90 to control cellular behavior of the cranial mesenchyme.</title>
        <authorList>
            <person name="Sarkar A.A."/>
            <person name="Zohn I.E."/>
        </authorList>
    </citation>
    <scope>SUBCELLULAR LOCATION</scope>
    <scope>INTERACTION WITH HECTD1</scope>
    <scope>UBIQUITINATION</scope>
</reference>
<reference key="24">
    <citation type="journal article" date="2013" name="Mol. Cell">
        <title>SIRT5-mediated lysine desuccinylation impacts diverse metabolic pathways.</title>
        <authorList>
            <person name="Park J."/>
            <person name="Chen Y."/>
            <person name="Tishkoff D.X."/>
            <person name="Peng C."/>
            <person name="Tan M."/>
            <person name="Dai L."/>
            <person name="Xie Z."/>
            <person name="Zhang Y."/>
            <person name="Zwaans B.M."/>
            <person name="Skinner M.E."/>
            <person name="Lombard D.B."/>
            <person name="Zhao Y."/>
        </authorList>
    </citation>
    <scope>ACETYLATION [LARGE SCALE ANALYSIS] AT LYS-58 AND LYS-84</scope>
    <scope>IDENTIFICATION BY MASS SPECTROMETRY [LARGE SCALE ANALYSIS]</scope>
    <source>
        <tissue>Embryonic fibroblast</tissue>
    </source>
</reference>
<reference key="25">
    <citation type="journal article" date="2016" name="J. Cell Sci.">
        <title>REV-ERBalpha influences the stability and nuclear localization of the glucocorticoid receptor.</title>
        <authorList>
            <person name="Okabe T."/>
            <person name="Chavan R."/>
            <person name="Fonseca Costa S.S."/>
            <person name="Brenna A."/>
            <person name="Ripperger J.A."/>
            <person name="Albrecht U."/>
        </authorList>
    </citation>
    <scope>INTERACTION WITH NR3C1 AND NR1D1</scope>
    <scope>SUBCELLULAR LOCATION</scope>
</reference>
<reference key="26">
    <citation type="journal article" date="2017" name="EMBO J.">
        <title>Tumor suppressor Tsc1 is a new Hsp90 co-chaperone that facilitates folding of kinase and non-kinase clients.</title>
        <authorList>
            <person name="Woodford M.R."/>
            <person name="Sager R.A."/>
            <person name="Marris E."/>
            <person name="Dunn D.M."/>
            <person name="Blanden A.R."/>
            <person name="Murphy R.L."/>
            <person name="Rensing N."/>
            <person name="Shapiro O."/>
            <person name="Panaretou B."/>
            <person name="Prodromou C."/>
            <person name="Loh S.N."/>
            <person name="Gutmann D.H."/>
            <person name="Bourboulia D."/>
            <person name="Bratslavsky G."/>
            <person name="Wong M."/>
            <person name="Mollapour M."/>
        </authorList>
    </citation>
    <scope>ACTIVITY REGULATION</scope>
    <scope>INTERACTION WITH TSC1 AND AHSA1</scope>
</reference>
<reference key="27">
    <citation type="journal article" date="2017" name="J. Cell. Biochem.">
        <title>Interaction of a Novel Chaperone PhLP2A With the Heat Shock Protein Hsp90.</title>
        <authorList>
            <person name="Krzemien-Ojak L."/>
            <person name="Goral A."/>
            <person name="Joachimiak E."/>
            <person name="Filipek A."/>
            <person name="Fabczak H."/>
        </authorList>
    </citation>
    <scope>INTERACTION WITH PDCL3</scope>
    <scope>SUBCELLULAR LOCATION</scope>
</reference>
<comment type="function">
    <text evidence="2">Molecular chaperone that promotes the maturation, structural maintenance and proper regulation of specific target proteins involved for instance in cell cycle control and signal transduction. Undergoes a functional cycle that is linked to its ATPase activity which is essential for its chaperone activity. This cycle probably induces conformational changes in the client proteins, thereby causing their activation. Interacts dynamically with various co-chaperones that modulate its substrate recognition, ATPase cycle and chaperone function. Engages with a range of client protein classes via its interaction with various co-chaperone proteins or complexes, that act as adapters, simultaneously able to interact with the specific client and the central chaperone itself. Recruitment of ATP and co-chaperone followed by client protein forms a functional chaperone. After the completion of the chaperoning process, properly folded client protein and co-chaperone leave HSP90 in an ADP-bound partially open conformation and finally, ADP is released from HSP90 which acquires an open conformation for the next cycle. Plays a critical role in mitochondrial import, delivers preproteins to the mitochondrial import receptor TOMM70. Apart from its chaperone activity, it also plays a role in the regulation of the transcription machinery. HSP90 and its co-chaperones modulate transcription at least at three different levels. In the first place, they alter the steady-state levels of certain transcription factors in response to various physiological cues. Second, they modulate the activity of certain epigenetic modifiers, such as histone deacetylases or DNA methyl transferases, and thereby respond to the change in the environment. Third, they participate in the eviction of histones from the promoter region of certain genes and thereby turn on gene expression. Binds bacterial lipopolysaccharide (LPS) and mediates LPS-induced inflammatory response, including TNF secretion by monocytes. Antagonizes STUB1-mediated inhibition of TGF-beta signaling via inhibition of STUB1-mediated SMAD3 ubiquitination and degradation. Mediates the association of TOMM70 with IRF3 or TBK1 in mitochondrial outer membrane which promotes host antiviral response.</text>
</comment>
<comment type="catalytic activity">
    <reaction evidence="2">
        <text>ATP + H2O = ADP + phosphate + H(+)</text>
        <dbReference type="Rhea" id="RHEA:13065"/>
        <dbReference type="ChEBI" id="CHEBI:15377"/>
        <dbReference type="ChEBI" id="CHEBI:15378"/>
        <dbReference type="ChEBI" id="CHEBI:30616"/>
        <dbReference type="ChEBI" id="CHEBI:43474"/>
        <dbReference type="ChEBI" id="CHEBI:456216"/>
        <dbReference type="EC" id="3.6.4.10"/>
    </reaction>
</comment>
<comment type="activity regulation">
    <text evidence="2 14">In the resting state, through the dimerization of its C-terminal domain, HSP90 forms a homodimer which is defined as the open conformation (By similarity). Upon ATP-binding, the N-terminal domain undergoes significant conformational changes and comes in contact to form an active closed conformation (By similarity). After HSP90 finishes its chaperoning tasks of assisting the proper folding, stabilization and activation of client proteins under the active state, ATP molecule is hydrolyzed to ADP which then dissociates from HSP90 and directs the protein back to the resting state (By similarity). Co-chaperone TSC1 promotes ATP binding and inhibits HSP90AA1 ATPase activity (PubMed:29127155). Binding to phosphorylated AHSA1 promotes HSP90AA1 ATPase activity (PubMed:29127155). Inhibited by geldanamycin, Ganetespib (STA-9090) and SNX-2112 (By similarity).</text>
</comment>
<comment type="subunit">
    <text evidence="2 5 6 7 9 10 12 13 14 16 17">Homodimer (PubMed:8289821). Identified in NR3C1/GCR steroid receptor-chaperone complexes formed at least by NR3C1, HSP90AA1 and a variety of proteins containing TPR repeats such as FKBP4, FKBP5, PPID, PPP5C or STIP1 (PubMed:11278753, PubMed:11751894, PubMed:9195923). Forms a complex containing HSP90AA1, TSC1 and TSC2; TSC1 is required to recruit TCS2 to the complex (By similarity). The closed form interacts (via the middle domain and TPR repeat-binding motif) with co-chaperone TSC1 (via C-terminus) (PubMed:29127155). Interacts with TOM34 (By similarity). Interacts with TERT; the interaction, together with PTGES3, is required for correct assembly and stabilization of the TERT holoenzyme complex (By similarity). Interacts with CHORDC1 and DNAJC7 (By similarity). Interacts with STUB1 and UBE2N; may couple the chaperone and ubiquitination systems (By similarity). Interacts (via TPR repeat-binding motif) with PPP5C (via TPR repeats); the interaction is direct and activates PPP5C phosphatase activity (By similarity). Following LPS binding, may form a complex with CXCR4, GDF5 and HSPA8 (By similarity). Interacts with KSR1 (PubMed:10409742). Interacts with co-chaperone CDC37 (via C-terminus); the interaction inhibits HSP90AA1 ATPase activity (By similarity). May interact with NWD1 (By similarity). Interacts with FNIP1 and FNIP2; the interaction inhibits HSP90AA1 ATPase activity (By similarity). Interacts with co-chaperone AHSA1 (phosphorylated on 'Tyr-223'); the interaction activates HSP90AA1 ATPase activity and results in the dissociation of TSC1 from HSP90AA1 (PubMed:29127155). Interacts with FLCN in the presence of FNIP1 (By similarity). Interacts with HSP70, STIP1 and PTGES3 (By similarity). Interacts with SMYD3; this interaction enhances SMYD3 histone-lysine N-methyltransferase (By similarity). Interacts with SGTA (via TPR repeats) (By similarity). Interacts with TTC1 (via TPR repeats) (By similarity). Interacts with HSF1 in an ATP-dependent manner (By similarity). Interacts with MET; the interaction suppresses MET kinase activity (By similarity). Interacts with ERBB2 in an ATP-dependent manner; the interaction suppresses ERBB2 kinase activity (By similarity). Interacts with HIF1A, KEAP1 and RHOBTB2 (By similarity). Interacts with HSF1; this interaction is decreased in a IER5-dependent manner, promoting HSF1 accumulation in the nucleus, homotrimerization and DNA-binding activities (By similarity). Interacts with STUB1 and SMAD3 (By similarity). Interacts with HSP90AB1; interaction is constitutive (By similarity). Interacts with HECTD1 (via N-terminus) (PubMed:22431752). Interacts with NR3C1 (via domain NR LBD) and NR1D1 (via domain NR LBD) (PubMed:27686098). Interacts with NLPR12. Interacts with PDCL3 (PubMed:27496612). Interacts with TOMM70; the interaction is required for preprotein mitochondrial import. Interacts with TOMM70, IRF3 and TBK1; the interactions are direct and mediate the association of TOMM70 with IRF3 and TBK1 (By similarity). Forms a complex with ASL, ASS1 and NOS2; the complex regulates cell-autonomous L-arginine synthesis and citrulline recycling while channeling extracellular L-arginine to nitric oxide synthesis pathway.</text>
</comment>
<comment type="interaction">
    <interactant intactId="EBI-78930">
        <id>P07901</id>
    </interactant>
    <interactant intactId="EBI-298707">
        <id>P31750</id>
        <label>Akt1</label>
    </interactant>
    <organismsDiffer>false</organismsDiffer>
    <experiments>6</experiments>
</comment>
<comment type="interaction">
    <interactant intactId="EBI-78930">
        <id>P07901</id>
    </interactant>
    <interactant intactId="EBI-7922331">
        <id>Q9R000</id>
        <label>Itgb1bp2</label>
    </interactant>
    <organismsDiffer>false</organismsDiffer>
    <experiments>5</experiments>
</comment>
<comment type="subcellular location">
    <subcellularLocation>
        <location evidence="10">Nucleus</location>
    </subcellularLocation>
    <subcellularLocation>
        <location evidence="7 10 12 13">Cytoplasm</location>
    </subcellularLocation>
    <subcellularLocation>
        <location evidence="2">Melanosome</location>
    </subcellularLocation>
    <subcellularLocation>
        <location evidence="2">Cell membrane</location>
    </subcellularLocation>
    <subcellularLocation>
        <location evidence="2">Mitochondrion</location>
    </subcellularLocation>
</comment>
<comment type="domain">
    <text evidence="2">The TPR repeat-binding motif mediates interaction with TPR repeat-containing proteins like the co-chaperone STUB1.</text>
</comment>
<comment type="PTM">
    <text evidence="8">ISGylated.</text>
</comment>
<comment type="PTM">
    <text evidence="2">S-nitrosylated; negatively regulates the ATPase activity and the activation of eNOS by HSP90AA1.</text>
</comment>
<comment type="PTM">
    <text evidence="10">Ubiquitinated via 'Lys-63'-linked polyubiquitination by HECTD1. Ubiquitination promotes translocation into the cytoplasm away from the membrane and secretory pathways.</text>
</comment>
<comment type="similarity">
    <text evidence="18">Belongs to the heat shock protein 90 family.</text>
</comment>
<gene>
    <name evidence="19" type="primary">Hsp90aa1</name>
    <name type="synonym">Hsp86</name>
    <name type="synonym">Hsp86-1</name>
    <name type="synonym">Hspca</name>
</gene>
<sequence length="733" mass="84788">MPEETQTQDQPMEEEEVETFAFQAEIAQLMSLIINTFYSNKEIFLRELISNSSDALDKIRYESLTDPSKLDSGKELHINLIPSKQDRTLTIVDTGIGMTKADLINNLGTIAKSGTKAFMEALQAGADISMIGQFGVGFYSAYLVAEKVTVITKHNDDEQYAWESSAGGSFTVRTDTGEPMGRGTKVILHLKEDQTEYLEERRIKEIVKKHSQFIGYPITLFVEKERDKEVSDDEAEEKEEKEEEKEKEEKESDDKPEIEDVGSDEEEEEKKDGDKKKKKKIKEKYIDQEELNKTKPIWTRNPDDITNEEYGEFYKSLTNDWEEHLAVKHFSVEGQLEFRALLFVPRRAPFDLFENRKKKNNIKLYVRRVFIMDNCEELIPEYLNFIRGVVDSEDLPLNISREMLQQSKILKVIRKNLVKKCLELFTELAEDKENYKKFYEQFSKNIKLGIHEDSQNRKKLSELLRYYTSASGDEMVSLKDYCTRMKENQKHIYFITGETKDQVANSAFVERLRKHGLEVIYMIEPIDEYCVQQLKEFEGKTLVSVTKEGLELPEDEEEKKKQEEKKTKFENLCKIMKDILEKKVEKVVVSNRLVTSPCCIVTSTYGWTANMERIMKAQALRDNSTMGYMAAKKHLEINPDHSIIETLRQKAEADKNDKSVKDLVILLYETALLSSGFSLEDPQTHANRIYRMIKLGLGIDEDDPTVDDTSAAVTEEMPPLEGDDDTSRMEEVD</sequence>
<feature type="initiator methionine" description="Removed" evidence="15 16">
    <location>
        <position position="1"/>
    </location>
</feature>
<feature type="chain" id="PRO_0000062912" description="Heat shock protein HSP 90-alpha">
    <location>
        <begin position="2"/>
        <end position="733"/>
    </location>
</feature>
<feature type="region of interest" description="Interaction with NR3C1" evidence="13">
    <location>
        <begin position="9"/>
        <end position="236"/>
    </location>
</feature>
<feature type="region of interest" description="Disordered" evidence="4">
    <location>
        <begin position="225"/>
        <end position="279"/>
    </location>
</feature>
<feature type="region of interest" description="Interaction with NR3C1" evidence="13">
    <location>
        <begin position="272"/>
        <end position="617"/>
    </location>
</feature>
<feature type="region of interest" description="Interaction with FLCN and FNIP1" evidence="2">
    <location>
        <begin position="285"/>
        <end position="733"/>
    </location>
</feature>
<feature type="region of interest" description="Interaction with FNIP2 and TSC1" evidence="2">
    <location>
        <begin position="285"/>
        <end position="621"/>
    </location>
</feature>
<feature type="region of interest" description="Interaction with NR1D1" evidence="13">
    <location>
        <begin position="629"/>
        <end position="732"/>
    </location>
</feature>
<feature type="region of interest" description="Required for homodimerization" evidence="2">
    <location>
        <begin position="683"/>
        <end position="733"/>
    </location>
</feature>
<feature type="region of interest" description="Disordered" evidence="4">
    <location>
        <begin position="701"/>
        <end position="733"/>
    </location>
</feature>
<feature type="region of interest" description="Essential for interaction with SMYD3, TSC1 and STIP1/HOP" evidence="2">
    <location>
        <begin position="729"/>
        <end position="733"/>
    </location>
</feature>
<feature type="region of interest" description="Essential for interaction with SGTA and TTC1" evidence="2">
    <location>
        <begin position="730"/>
        <end position="733"/>
    </location>
</feature>
<feature type="short sequence motif" description="TPR repeat-binding" evidence="2">
    <location>
        <begin position="724"/>
        <end position="733"/>
    </location>
</feature>
<feature type="compositionally biased region" description="Acidic residues" evidence="4">
    <location>
        <begin position="230"/>
        <end position="246"/>
    </location>
</feature>
<feature type="compositionally biased region" description="Acidic residues" evidence="4">
    <location>
        <begin position="256"/>
        <end position="269"/>
    </location>
</feature>
<feature type="binding site" evidence="1">
    <location>
        <position position="51"/>
    </location>
    <ligand>
        <name>ATP</name>
        <dbReference type="ChEBI" id="CHEBI:30616"/>
    </ligand>
</feature>
<feature type="binding site" evidence="1">
    <location>
        <position position="93"/>
    </location>
    <ligand>
        <name>ATP</name>
        <dbReference type="ChEBI" id="CHEBI:30616"/>
    </ligand>
</feature>
<feature type="binding site" evidence="1">
    <location>
        <position position="112"/>
    </location>
    <ligand>
        <name>ATP</name>
        <dbReference type="ChEBI" id="CHEBI:30616"/>
    </ligand>
</feature>
<feature type="binding site" evidence="1">
    <location>
        <position position="138"/>
    </location>
    <ligand>
        <name>ATP</name>
        <dbReference type="ChEBI" id="CHEBI:30616"/>
    </ligand>
</feature>
<feature type="binding site" evidence="1">
    <location>
        <position position="401"/>
    </location>
    <ligand>
        <name>ATP</name>
        <dbReference type="ChEBI" id="CHEBI:30616"/>
    </ligand>
</feature>
<feature type="modified residue" description="Phosphothreonine; by PRKDC" evidence="11">
    <location>
        <position position="5"/>
    </location>
</feature>
<feature type="modified residue" description="Phosphothreonine; by PRKDC" evidence="11">
    <location>
        <position position="7"/>
    </location>
</feature>
<feature type="modified residue" description="N6-acetyllysine" evidence="27">
    <location>
        <position position="58"/>
    </location>
</feature>
<feature type="modified residue" description="N6-acetyllysine" evidence="27">
    <location>
        <position position="84"/>
    </location>
</feature>
<feature type="modified residue" description="Phosphoserine" evidence="20 26">
    <location>
        <position position="231"/>
    </location>
</feature>
<feature type="modified residue" description="Phosphoserine" evidence="2">
    <location>
        <position position="252"/>
    </location>
</feature>
<feature type="modified residue" description="Phosphoserine" evidence="21 24 25 26">
    <location>
        <position position="263"/>
    </location>
</feature>
<feature type="modified residue" description="Phosphotyrosine" evidence="23">
    <location>
        <position position="314"/>
    </location>
</feature>
<feature type="modified residue" description="N6-acetyllysine" evidence="2">
    <location>
        <position position="444"/>
    </location>
</feature>
<feature type="modified residue" description="Phosphoserine" evidence="3">
    <location>
        <position position="454"/>
    </location>
</feature>
<feature type="modified residue" description="N6-acetyllysine" evidence="2">
    <location>
        <position position="459"/>
    </location>
</feature>
<feature type="modified residue" description="Phosphoserine" evidence="26">
    <location>
        <position position="477"/>
    </location>
</feature>
<feature type="modified residue" description="N6-acetyllysine" evidence="2">
    <location>
        <position position="490"/>
    </location>
</feature>
<feature type="modified residue" description="Phosphotyrosine" evidence="22">
    <location>
        <position position="493"/>
    </location>
</feature>
<feature type="modified residue" description="N6-acetyllysine" evidence="2">
    <location>
        <position position="586"/>
    </location>
</feature>
<feature type="modified residue" description="S-nitrosocysteine" evidence="2">
    <location>
        <position position="599"/>
    </location>
</feature>
<feature type="modified residue" description="Phosphoserine" evidence="2">
    <location>
        <position position="642"/>
    </location>
</feature>
<feature type="sequence conflict" description="In Ref. 6; AAA37868." evidence="18" ref="6">
    <original>T</original>
    <variation>A</variation>
    <location>
        <position position="7"/>
    </location>
</feature>
<feature type="sequence conflict" description="In Ref. 6; AAA37868." evidence="18" ref="6">
    <location>
        <begin position="242"/>
        <end position="245"/>
    </location>
</feature>
<feature type="sequence conflict" description="In Ref. 6; AAA37868." evidence="18" ref="6">
    <original>R</original>
    <variation>K</variation>
    <location>
        <position position="356"/>
    </location>
</feature>
<feature type="strand" evidence="28">
    <location>
        <begin position="17"/>
        <end position="21"/>
    </location>
</feature>
<feature type="helix" evidence="28">
    <location>
        <begin position="24"/>
        <end position="35"/>
    </location>
</feature>
<feature type="helix" evidence="28">
    <location>
        <begin position="43"/>
        <end position="63"/>
    </location>
</feature>
<feature type="helix" evidence="28">
    <location>
        <begin position="67"/>
        <end position="70"/>
    </location>
</feature>
<feature type="strand" evidence="28">
    <location>
        <begin position="78"/>
        <end position="83"/>
    </location>
</feature>
<feature type="turn" evidence="28">
    <location>
        <begin position="84"/>
        <end position="87"/>
    </location>
</feature>
<feature type="strand" evidence="28">
    <location>
        <begin position="88"/>
        <end position="93"/>
    </location>
</feature>
<feature type="helix" evidence="28">
    <location>
        <begin position="100"/>
        <end position="104"/>
    </location>
</feature>
<feature type="helix" evidence="28">
    <location>
        <begin position="106"/>
        <end position="123"/>
    </location>
</feature>
<feature type="helix" evidence="28">
    <location>
        <begin position="128"/>
        <end position="134"/>
    </location>
</feature>
<feature type="helix" evidence="28">
    <location>
        <begin position="137"/>
        <end position="143"/>
    </location>
</feature>
<feature type="strand" evidence="28">
    <location>
        <begin position="145"/>
        <end position="153"/>
    </location>
</feature>
<feature type="strand" evidence="28">
    <location>
        <begin position="159"/>
        <end position="164"/>
    </location>
</feature>
<feature type="strand" evidence="28">
    <location>
        <begin position="169"/>
        <end position="174"/>
    </location>
</feature>
<feature type="strand" evidence="28">
    <location>
        <begin position="181"/>
        <end position="190"/>
    </location>
</feature>
<feature type="helix" evidence="28">
    <location>
        <begin position="192"/>
        <end position="198"/>
    </location>
</feature>
<feature type="helix" evidence="28">
    <location>
        <begin position="200"/>
        <end position="210"/>
    </location>
</feature>
<feature type="strand" evidence="28">
    <location>
        <begin position="218"/>
        <end position="220"/>
    </location>
</feature>
<name>HS90A_MOUSE</name>
<accession>P07901</accession>
<evidence type="ECO:0000250" key="1"/>
<evidence type="ECO:0000250" key="2">
    <source>
        <dbReference type="UniProtKB" id="P07900"/>
    </source>
</evidence>
<evidence type="ECO:0000250" key="3">
    <source>
        <dbReference type="UniProtKB" id="P82995"/>
    </source>
</evidence>
<evidence type="ECO:0000256" key="4">
    <source>
        <dbReference type="SAM" id="MobiDB-lite"/>
    </source>
</evidence>
<evidence type="ECO:0000269" key="5">
    <source>
    </source>
</evidence>
<evidence type="ECO:0000269" key="6">
    <source>
    </source>
</evidence>
<evidence type="ECO:0000269" key="7">
    <source>
    </source>
</evidence>
<evidence type="ECO:0000269" key="8">
    <source>
    </source>
</evidence>
<evidence type="ECO:0000269" key="9">
    <source>
    </source>
</evidence>
<evidence type="ECO:0000269" key="10">
    <source>
    </source>
</evidence>
<evidence type="ECO:0000269" key="11">
    <source>
    </source>
</evidence>
<evidence type="ECO:0000269" key="12">
    <source>
    </source>
</evidence>
<evidence type="ECO:0000269" key="13">
    <source>
    </source>
</evidence>
<evidence type="ECO:0000269" key="14">
    <source>
    </source>
</evidence>
<evidence type="ECO:0000269" key="15">
    <source>
    </source>
</evidence>
<evidence type="ECO:0000269" key="16">
    <source>
    </source>
</evidence>
<evidence type="ECO:0000269" key="17">
    <source>
    </source>
</evidence>
<evidence type="ECO:0000305" key="18"/>
<evidence type="ECO:0000312" key="19">
    <source>
        <dbReference type="MGI" id="MGI:96250"/>
    </source>
</evidence>
<evidence type="ECO:0007744" key="20">
    <source>
    </source>
</evidence>
<evidence type="ECO:0007744" key="21">
    <source>
    </source>
</evidence>
<evidence type="ECO:0007744" key="22">
    <source>
    </source>
</evidence>
<evidence type="ECO:0007744" key="23">
    <source>
    </source>
</evidence>
<evidence type="ECO:0007744" key="24">
    <source>
    </source>
</evidence>
<evidence type="ECO:0007744" key="25">
    <source>
    </source>
</evidence>
<evidence type="ECO:0007744" key="26">
    <source>
    </source>
</evidence>
<evidence type="ECO:0007744" key="27">
    <source>
    </source>
</evidence>
<evidence type="ECO:0007829" key="28">
    <source>
        <dbReference type="PDB" id="7D1V"/>
    </source>
</evidence>